<gene>
    <name type="ordered locus">MM_0789</name>
</gene>
<dbReference type="EC" id="2.5.1.81"/>
<dbReference type="EMBL" id="AE008384">
    <property type="protein sequence ID" value="AAM30485.1"/>
    <property type="molecule type" value="Genomic_DNA"/>
</dbReference>
<dbReference type="RefSeq" id="WP_011032739.1">
    <property type="nucleotide sequence ID" value="NC_003901.1"/>
</dbReference>
<dbReference type="PDB" id="3IPI">
    <property type="method" value="X-ray"/>
    <property type="resolution" value="1.90 A"/>
    <property type="chains" value="A=12-295"/>
</dbReference>
<dbReference type="PDBsum" id="3IPI"/>
<dbReference type="SMR" id="Q8PYS1"/>
<dbReference type="DNASU" id="1479131"/>
<dbReference type="KEGG" id="mma:MM_0789"/>
<dbReference type="PATRIC" id="fig|192952.21.peg.937"/>
<dbReference type="eggNOG" id="arCOG01727">
    <property type="taxonomic scope" value="Archaea"/>
</dbReference>
<dbReference type="HOGENOM" id="CLU_014015_2_0_2"/>
<dbReference type="BRENDA" id="2.5.1.81">
    <property type="organism ID" value="3270"/>
</dbReference>
<dbReference type="EvolutionaryTrace" id="Q8PYS1"/>
<dbReference type="Proteomes" id="UP000000595">
    <property type="component" value="Chromosome"/>
</dbReference>
<dbReference type="GO" id="GO:0044687">
    <property type="term" value="F:geranylfarnesyl diphosphate synthase activity"/>
    <property type="evidence" value="ECO:0007669"/>
    <property type="project" value="UniProtKB-EC"/>
</dbReference>
<dbReference type="GO" id="GO:0046872">
    <property type="term" value="F:metal ion binding"/>
    <property type="evidence" value="ECO:0007669"/>
    <property type="project" value="UniProtKB-KW"/>
</dbReference>
<dbReference type="GO" id="GO:0004659">
    <property type="term" value="F:prenyltransferase activity"/>
    <property type="evidence" value="ECO:0000314"/>
    <property type="project" value="UniProtKB"/>
</dbReference>
<dbReference type="GO" id="GO:0008299">
    <property type="term" value="P:isoprenoid biosynthetic process"/>
    <property type="evidence" value="ECO:0007669"/>
    <property type="project" value="InterPro"/>
</dbReference>
<dbReference type="CDD" id="cd00685">
    <property type="entry name" value="Trans_IPPS_HT"/>
    <property type="match status" value="1"/>
</dbReference>
<dbReference type="Gene3D" id="1.10.600.10">
    <property type="entry name" value="Farnesyl Diphosphate Synthase"/>
    <property type="match status" value="1"/>
</dbReference>
<dbReference type="InterPro" id="IPR053662">
    <property type="entry name" value="GFPP_synthase-like"/>
</dbReference>
<dbReference type="InterPro" id="IPR008949">
    <property type="entry name" value="Isoprenoid_synthase_dom_sf"/>
</dbReference>
<dbReference type="InterPro" id="IPR000092">
    <property type="entry name" value="Polyprenyl_synt"/>
</dbReference>
<dbReference type="NCBIfam" id="NF040627">
    <property type="entry name" value="GFPS_Meth"/>
    <property type="match status" value="1"/>
</dbReference>
<dbReference type="PANTHER" id="PTHR12001">
    <property type="entry name" value="GERANYLGERANYL PYROPHOSPHATE SYNTHASE"/>
    <property type="match status" value="1"/>
</dbReference>
<dbReference type="PANTHER" id="PTHR12001:SF85">
    <property type="entry name" value="SHORT CHAIN ISOPRENYL DIPHOSPHATE SYNTHASE"/>
    <property type="match status" value="1"/>
</dbReference>
<dbReference type="Pfam" id="PF00348">
    <property type="entry name" value="polyprenyl_synt"/>
    <property type="match status" value="1"/>
</dbReference>
<dbReference type="SFLD" id="SFLDS00005">
    <property type="entry name" value="Isoprenoid_Synthase_Type_I"/>
    <property type="match status" value="1"/>
</dbReference>
<dbReference type="SFLD" id="SFLDG01017">
    <property type="entry name" value="Polyprenyl_Transferase_Like"/>
    <property type="match status" value="1"/>
</dbReference>
<dbReference type="SUPFAM" id="SSF48576">
    <property type="entry name" value="Terpenoid synthases"/>
    <property type="match status" value="1"/>
</dbReference>
<evidence type="ECO:0000250" key="1"/>
<evidence type="ECO:0000250" key="2">
    <source>
        <dbReference type="UniProtKB" id="P14324"/>
    </source>
</evidence>
<evidence type="ECO:0000250" key="3">
    <source>
        <dbReference type="UniProtKB" id="Q12051"/>
    </source>
</evidence>
<evidence type="ECO:0000269" key="4">
    <source>
    </source>
</evidence>
<evidence type="ECO:0000305" key="5"/>
<evidence type="ECO:0000305" key="6">
    <source>
    </source>
</evidence>
<evidence type="ECO:0007829" key="7">
    <source>
        <dbReference type="PDB" id="3IPI"/>
    </source>
</evidence>
<proteinExistence type="evidence at protein level"/>
<accession>Q8PYS1</accession>
<reference key="1">
    <citation type="journal article" date="2002" name="J. Mol. Microbiol. Biotechnol.">
        <title>The genome of Methanosarcina mazei: evidence for lateral gene transfer between Bacteria and Archaea.</title>
        <authorList>
            <person name="Deppenmeier U."/>
            <person name="Johann A."/>
            <person name="Hartsch T."/>
            <person name="Merkl R."/>
            <person name="Schmitz R.A."/>
            <person name="Martinez-Arias R."/>
            <person name="Henne A."/>
            <person name="Wiezer A."/>
            <person name="Baeumer S."/>
            <person name="Jacobi C."/>
            <person name="Brueggemann H."/>
            <person name="Lienard T."/>
            <person name="Christmann A."/>
            <person name="Boemecke M."/>
            <person name="Steckel S."/>
            <person name="Bhattacharyya A."/>
            <person name="Lykidis A."/>
            <person name="Overbeek R."/>
            <person name="Klenk H.-P."/>
            <person name="Gunsalus R.P."/>
            <person name="Fritz H.-J."/>
            <person name="Gottschalk G."/>
        </authorList>
    </citation>
    <scope>NUCLEOTIDE SEQUENCE [LARGE SCALE GENOMIC DNA]</scope>
    <source>
        <strain>ATCC BAA-159 / DSM 3647 / Goe1 / Go1 / JCM 11833 / OCM 88</strain>
    </source>
</reference>
<reference key="2">
    <citation type="journal article" date="2010" name="Biochem. Biophys. Res. Commun.">
        <title>Geranylfarnesyl diphosphate synthase from Methanosarcina mazei: Different role, different evolution.</title>
        <authorList>
            <person name="Ogawa T."/>
            <person name="Yoshimura T."/>
            <person name="Hemmi H."/>
        </authorList>
    </citation>
    <scope>FUNCTION AS A GERANYLFARNESYL DIPHOSPHATE SYNTHASE</scope>
    <scope>CATALYTIC ACTIVITY</scope>
    <scope>BIOPHYSICOCHEMICAL PROPERTIES</scope>
    <scope>COFACTOR</scope>
    <scope>SUBSTRATE SPECIFICITY</scope>
</reference>
<reference key="3">
    <citation type="submission" date="2009-08" db="PDB data bank">
        <title>Crystal Structure of a Geranyltranstransferase from the Methanosarcina mazei.</title>
        <authorList>
            <person name="Kumaran D."/>
            <person name="Mohammed M.B."/>
            <person name="Brown A."/>
            <person name="Burley S.K."/>
            <person name="Swaminathan S."/>
        </authorList>
    </citation>
    <scope>X-RAY CRYSTALLOGRAPHY (1.90 ANGSTROMS) OF 12-295</scope>
</reference>
<feature type="chain" id="PRO_0000419205" description="Geranylfarnesyl diphosphate synthase">
    <location>
        <begin position="1"/>
        <end position="295"/>
    </location>
</feature>
<feature type="binding site" evidence="2">
    <location>
        <position position="51"/>
    </location>
    <ligand>
        <name>isopentenyl diphosphate</name>
        <dbReference type="ChEBI" id="CHEBI:128769"/>
    </ligand>
</feature>
<feature type="binding site" evidence="2">
    <location>
        <position position="54"/>
    </location>
    <ligand>
        <name>isopentenyl diphosphate</name>
        <dbReference type="ChEBI" id="CHEBI:128769"/>
    </ligand>
</feature>
<feature type="binding site" evidence="3">
    <location>
        <position position="83"/>
    </location>
    <ligand>
        <name>isopentenyl diphosphate</name>
        <dbReference type="ChEBI" id="CHEBI:128769"/>
    </ligand>
</feature>
<feature type="binding site" evidence="2">
    <location>
        <position position="90"/>
    </location>
    <ligand>
        <name>Mg(2+)</name>
        <dbReference type="ChEBI" id="CHEBI:18420"/>
        <label>1</label>
    </ligand>
</feature>
<feature type="binding site" evidence="2">
    <location>
        <position position="90"/>
    </location>
    <ligand>
        <name>Mg(2+)</name>
        <dbReference type="ChEBI" id="CHEBI:18420"/>
        <label>2</label>
    </ligand>
</feature>
<feature type="binding site" evidence="2">
    <location>
        <position position="94"/>
    </location>
    <ligand>
        <name>Mg(2+)</name>
        <dbReference type="ChEBI" id="CHEBI:18420"/>
        <label>1</label>
    </ligand>
</feature>
<feature type="binding site" evidence="2">
    <location>
        <position position="94"/>
    </location>
    <ligand>
        <name>Mg(2+)</name>
        <dbReference type="ChEBI" id="CHEBI:18420"/>
        <label>2</label>
    </ligand>
</feature>
<feature type="binding site" evidence="1">
    <location>
        <position position="99"/>
    </location>
    <ligand>
        <name>an all-trans-polyprenyl diphosphate</name>
        <dbReference type="ChEBI" id="CHEBI:58914"/>
    </ligand>
</feature>
<feature type="binding site" evidence="2">
    <location>
        <position position="100"/>
    </location>
    <ligand>
        <name>isopentenyl diphosphate</name>
        <dbReference type="ChEBI" id="CHEBI:128769"/>
    </ligand>
</feature>
<feature type="binding site" evidence="1">
    <location>
        <position position="174"/>
    </location>
    <ligand>
        <name>an all-trans-polyprenyl diphosphate</name>
        <dbReference type="ChEBI" id="CHEBI:58914"/>
    </ligand>
</feature>
<feature type="binding site" evidence="1">
    <location>
        <position position="175"/>
    </location>
    <ligand>
        <name>an all-trans-polyprenyl diphosphate</name>
        <dbReference type="ChEBI" id="CHEBI:58914"/>
    </ligand>
</feature>
<feature type="binding site" evidence="1">
    <location>
        <position position="212"/>
    </location>
    <ligand>
        <name>an all-trans-polyprenyl diphosphate</name>
        <dbReference type="ChEBI" id="CHEBI:58914"/>
    </ligand>
</feature>
<feature type="helix" evidence="7">
    <location>
        <begin position="13"/>
        <end position="15"/>
    </location>
</feature>
<feature type="helix" evidence="7">
    <location>
        <begin position="17"/>
        <end position="31"/>
    </location>
</feature>
<feature type="helix" evidence="7">
    <location>
        <begin position="36"/>
        <end position="46"/>
    </location>
</feature>
<feature type="helix" evidence="7">
    <location>
        <begin position="53"/>
        <end position="66"/>
    </location>
</feature>
<feature type="helix" evidence="7">
    <location>
        <begin position="70"/>
        <end position="72"/>
    </location>
</feature>
<feature type="helix" evidence="7">
    <location>
        <begin position="73"/>
        <end position="96"/>
    </location>
</feature>
<feature type="helix" evidence="7">
    <location>
        <begin position="111"/>
        <end position="129"/>
    </location>
</feature>
<feature type="helix" evidence="7">
    <location>
        <begin position="130"/>
        <end position="132"/>
    </location>
</feature>
<feature type="helix" evidence="7">
    <location>
        <begin position="134"/>
        <end position="155"/>
    </location>
</feature>
<feature type="helix" evidence="7">
    <location>
        <begin position="165"/>
        <end position="174"/>
    </location>
</feature>
<feature type="helix" evidence="7">
    <location>
        <begin position="176"/>
        <end position="189"/>
    </location>
</feature>
<feature type="helix" evidence="7">
    <location>
        <begin position="194"/>
        <end position="225"/>
    </location>
</feature>
<feature type="helix" evidence="7">
    <location>
        <begin position="236"/>
        <end position="240"/>
    </location>
</feature>
<feature type="turn" evidence="7">
    <location>
        <begin position="241"/>
        <end position="243"/>
    </location>
</feature>
<feature type="helix" evidence="7">
    <location>
        <begin position="246"/>
        <end position="268"/>
    </location>
</feature>
<feature type="helix" evidence="7">
    <location>
        <begin position="275"/>
        <end position="286"/>
    </location>
</feature>
<feature type="helix" evidence="7">
    <location>
        <begin position="289"/>
        <end position="292"/>
    </location>
</feature>
<organism>
    <name type="scientific">Methanosarcina mazei (strain ATCC BAA-159 / DSM 3647 / Goe1 / Go1 / JCM 11833 / OCM 88)</name>
    <name type="common">Methanosarcina frisia</name>
    <dbReference type="NCBI Taxonomy" id="192952"/>
    <lineage>
        <taxon>Archaea</taxon>
        <taxon>Methanobacteriati</taxon>
        <taxon>Methanobacteriota</taxon>
        <taxon>Stenosarchaea group</taxon>
        <taxon>Methanomicrobia</taxon>
        <taxon>Methanosarcinales</taxon>
        <taxon>Methanosarcinaceae</taxon>
        <taxon>Methanosarcina</taxon>
    </lineage>
</organism>
<name>GFPS_METMA</name>
<keyword id="KW-0002">3D-structure</keyword>
<keyword id="KW-0460">Magnesium</keyword>
<keyword id="KW-0479">Metal-binding</keyword>
<keyword id="KW-0808">Transferase</keyword>
<sequence>MPVKVHGVILMNIEEWEEYRYVEAGIKESITLIEDPGLKKMVEHVCHSGGKRIRPIILLLVSEICSGSYSRSLNAALAVEMMHSASLIHDDLLDQGLVRRNLPSAPEKFGPSGALLCGDYLIAKSIAFISPYGEKVIQDFGKAGMDMAEGEVLDLKLEDESFGENDYFKCIYKKTASLFAISASIGAYTGGAEEELAERFSHFGNALGTAYQIVDDILEFLEVVEGKESKFTSETLPHIYMKSTSKEEALKKSIDCVKLHVAAAKETLETFRECPARDKLFQITDYITVDMLENL</sequence>
<comment type="function">
    <text evidence="4">Involved in biosynthesis of the polyprenyl side-chain of methanophenazine, an electron carrier utilized for methanogenesis. Catalyzes the condensation of isopentenyl pyrophosphate with the allylic pyrophosphates to yield geranylfarnesyl diphosphate (GFPP). It prefers geranylgeranyl diphosphate (GGPP) and farnesyl diphosphate (FPP) as allylic substrate.</text>
</comment>
<comment type="catalytic activity">
    <reaction evidence="4">
        <text>isopentenyl diphosphate + (2E,6E,10E)-geranylgeranyl diphosphate = (2E,6E,10E,14E)-geranylfarnesyl diphosphate + diphosphate</text>
        <dbReference type="Rhea" id="RHEA:25694"/>
        <dbReference type="ChEBI" id="CHEBI:33019"/>
        <dbReference type="ChEBI" id="CHEBI:57907"/>
        <dbReference type="ChEBI" id="CHEBI:58756"/>
        <dbReference type="ChEBI" id="CHEBI:128769"/>
        <dbReference type="EC" id="2.5.1.81"/>
    </reaction>
</comment>
<comment type="cofactor">
    <cofactor evidence="6">
        <name>Mg(2+)</name>
        <dbReference type="ChEBI" id="CHEBI:18420"/>
    </cofactor>
    <text evidence="6">Binds 2 Mg(2+) ions per subunit.</text>
</comment>
<comment type="biophysicochemical properties">
    <phDependence>
        <text evidence="4">Optimum pH is 7.</text>
    </phDependence>
    <temperatureDependence>
        <text evidence="4">Optimum temperature is 40 degrees Celsius.</text>
    </temperatureDependence>
</comment>
<comment type="subunit">
    <text evidence="1">Homodimer.</text>
</comment>
<comment type="similarity">
    <text evidence="5">Belongs to the FPP/GGPP synthase family.</text>
</comment>
<protein>
    <recommendedName>
        <fullName>Geranylfarnesyl diphosphate synthase</fullName>
        <shortName>GFPS</shortName>
        <ecNumber>2.5.1.81</ecNumber>
    </recommendedName>
    <alternativeName>
        <fullName>Farnesylgeranyl diphosphate synthase</fullName>
        <shortName>FGPP synthase</shortName>
    </alternativeName>
</protein>